<accession>B5BCN6</accession>
<keyword id="KW-0460">Magnesium</keyword>
<keyword id="KW-0464">Manganese</keyword>
<keyword id="KW-0474">Menaquinone biosynthesis</keyword>
<keyword id="KW-0479">Metal-binding</keyword>
<keyword id="KW-0786">Thiamine pyrophosphate</keyword>
<keyword id="KW-0808">Transferase</keyword>
<sequence length="556" mass="61393">MSVSAFNRRWAAVILEALTRHGVRHVCIAPGSRSTPLTLAAAENPAFIHHTHFDERGLGHLALGLAKVSQQPVAVIVTSGTAVANLYPALIEAGLTGEKLILLTADRPPELIDCGANQAIRQAGMFASHPSQTLSLPRPTQDIPARWLVSTIDNALAMLHAGALHINCPFAEPLYGDMNDTGLVWQQRLGDWWQDEKPWLREARRLASDKQRDWFFWRQKRGVVVAGRMSAEEGKKVAQWAQTLGWPLIGDVLSQTGQPLPCADLWLGNAKAVTELQQAQIVVQLGSSLTGKRLLQWQATCEPEEYWVIDNIEGRLDPAHHRGRRLVAKIADWLELHPAEKRKPWCVGIPRLAELAWQRVVAQRDTFGEAQLAHRIRDYLPEQGQLFVGNSLVVRLIDALSQLPAGYPVYSNRGASGIDGLLSTAAGVQRASAKSTLAIVGDLSALYDLNALALLRQVSAPFVLIVVNNNGGQIFSLLPTPQSKRERFYLMPQNVHFDHAAAMFNLRYHRPENWEELESALAGAWRTPATTVIELVVNDTDGAQTLQQLLAQVSHL</sequence>
<gene>
    <name evidence="1" type="primary">menD</name>
    <name type="ordered locus">SSPA0518</name>
</gene>
<protein>
    <recommendedName>
        <fullName evidence="1">2-succinyl-5-enolpyruvyl-6-hydroxy-3-cyclohexene-1-carboxylate synthase</fullName>
        <shortName evidence="1">SEPHCHC synthase</shortName>
        <ecNumber evidence="1">2.2.1.9</ecNumber>
    </recommendedName>
    <alternativeName>
        <fullName evidence="1">Menaquinone biosynthesis protein MenD</fullName>
    </alternativeName>
</protein>
<feature type="chain" id="PRO_1000187095" description="2-succinyl-5-enolpyruvyl-6-hydroxy-3-cyclohexene-1-carboxylate synthase">
    <location>
        <begin position="1"/>
        <end position="556"/>
    </location>
</feature>
<dbReference type="EC" id="2.2.1.9" evidence="1"/>
<dbReference type="EMBL" id="FM200053">
    <property type="protein sequence ID" value="CAR58647.1"/>
    <property type="molecule type" value="Genomic_DNA"/>
</dbReference>
<dbReference type="RefSeq" id="WP_000116383.1">
    <property type="nucleotide sequence ID" value="NC_011147.1"/>
</dbReference>
<dbReference type="SMR" id="B5BCN6"/>
<dbReference type="KEGG" id="sek:SSPA0518"/>
<dbReference type="HOGENOM" id="CLU_006051_3_0_6"/>
<dbReference type="UniPathway" id="UPA00079"/>
<dbReference type="UniPathway" id="UPA01057">
    <property type="reaction ID" value="UER00164"/>
</dbReference>
<dbReference type="Proteomes" id="UP000001869">
    <property type="component" value="Chromosome"/>
</dbReference>
<dbReference type="GO" id="GO:0070204">
    <property type="term" value="F:2-succinyl-5-enolpyruvyl-6-hydroxy-3-cyclohexene-1-carboxylic-acid synthase activity"/>
    <property type="evidence" value="ECO:0007669"/>
    <property type="project" value="UniProtKB-UniRule"/>
</dbReference>
<dbReference type="GO" id="GO:0000287">
    <property type="term" value="F:magnesium ion binding"/>
    <property type="evidence" value="ECO:0007669"/>
    <property type="project" value="UniProtKB-UniRule"/>
</dbReference>
<dbReference type="GO" id="GO:0030145">
    <property type="term" value="F:manganese ion binding"/>
    <property type="evidence" value="ECO:0007669"/>
    <property type="project" value="UniProtKB-UniRule"/>
</dbReference>
<dbReference type="GO" id="GO:0030976">
    <property type="term" value="F:thiamine pyrophosphate binding"/>
    <property type="evidence" value="ECO:0007669"/>
    <property type="project" value="UniProtKB-UniRule"/>
</dbReference>
<dbReference type="GO" id="GO:0009234">
    <property type="term" value="P:menaquinone biosynthetic process"/>
    <property type="evidence" value="ECO:0007669"/>
    <property type="project" value="UniProtKB-UniRule"/>
</dbReference>
<dbReference type="CDD" id="cd07037">
    <property type="entry name" value="TPP_PYR_MenD"/>
    <property type="match status" value="1"/>
</dbReference>
<dbReference type="CDD" id="cd02009">
    <property type="entry name" value="TPP_SHCHC_synthase"/>
    <property type="match status" value="1"/>
</dbReference>
<dbReference type="FunFam" id="3.40.50.1220:FF:000010">
    <property type="entry name" value="2-succinyl-5-enolpyruvyl-6-hydroxy-3-cyclohexene-1-carboxylate synthase"/>
    <property type="match status" value="1"/>
</dbReference>
<dbReference type="FunFam" id="3.40.50.970:FF:000029">
    <property type="entry name" value="2-succinyl-5-enolpyruvyl-6-hydroxy-3-cyclohexene-1-carboxylate synthase"/>
    <property type="match status" value="1"/>
</dbReference>
<dbReference type="Gene3D" id="3.40.50.970">
    <property type="match status" value="2"/>
</dbReference>
<dbReference type="Gene3D" id="3.40.50.1220">
    <property type="entry name" value="TPP-binding domain"/>
    <property type="match status" value="1"/>
</dbReference>
<dbReference type="HAMAP" id="MF_01659">
    <property type="entry name" value="MenD"/>
    <property type="match status" value="1"/>
</dbReference>
<dbReference type="InterPro" id="IPR004433">
    <property type="entry name" value="MenaQ_synth_MenD"/>
</dbReference>
<dbReference type="InterPro" id="IPR032264">
    <property type="entry name" value="MenD_middle"/>
</dbReference>
<dbReference type="InterPro" id="IPR029061">
    <property type="entry name" value="THDP-binding"/>
</dbReference>
<dbReference type="InterPro" id="IPR012001">
    <property type="entry name" value="Thiamin_PyroP_enz_TPP-bd_dom"/>
</dbReference>
<dbReference type="InterPro" id="IPR011766">
    <property type="entry name" value="TPP_enzyme_TPP-bd"/>
</dbReference>
<dbReference type="NCBIfam" id="TIGR00173">
    <property type="entry name" value="menD"/>
    <property type="match status" value="1"/>
</dbReference>
<dbReference type="PANTHER" id="PTHR42916">
    <property type="entry name" value="2-SUCCINYL-5-ENOLPYRUVYL-6-HYDROXY-3-CYCLOHEXENE-1-CARBOXYLATE SYNTHASE"/>
    <property type="match status" value="1"/>
</dbReference>
<dbReference type="PANTHER" id="PTHR42916:SF1">
    <property type="entry name" value="PROTEIN PHYLLO, CHLOROPLASTIC"/>
    <property type="match status" value="1"/>
</dbReference>
<dbReference type="Pfam" id="PF02775">
    <property type="entry name" value="TPP_enzyme_C"/>
    <property type="match status" value="1"/>
</dbReference>
<dbReference type="Pfam" id="PF16582">
    <property type="entry name" value="TPP_enzyme_M_2"/>
    <property type="match status" value="1"/>
</dbReference>
<dbReference type="Pfam" id="PF02776">
    <property type="entry name" value="TPP_enzyme_N"/>
    <property type="match status" value="1"/>
</dbReference>
<dbReference type="PIRSF" id="PIRSF004983">
    <property type="entry name" value="MenD"/>
    <property type="match status" value="1"/>
</dbReference>
<dbReference type="SUPFAM" id="SSF52518">
    <property type="entry name" value="Thiamin diphosphate-binding fold (THDP-binding)"/>
    <property type="match status" value="2"/>
</dbReference>
<evidence type="ECO:0000255" key="1">
    <source>
        <dbReference type="HAMAP-Rule" id="MF_01659"/>
    </source>
</evidence>
<reference key="1">
    <citation type="journal article" date="2009" name="BMC Genomics">
        <title>Pseudogene accumulation in the evolutionary histories of Salmonella enterica serovars Paratyphi A and Typhi.</title>
        <authorList>
            <person name="Holt K.E."/>
            <person name="Thomson N.R."/>
            <person name="Wain J."/>
            <person name="Langridge G.C."/>
            <person name="Hasan R."/>
            <person name="Bhutta Z.A."/>
            <person name="Quail M.A."/>
            <person name="Norbertczak H."/>
            <person name="Walker D."/>
            <person name="Simmonds M."/>
            <person name="White B."/>
            <person name="Bason N."/>
            <person name="Mungall K."/>
            <person name="Dougan G."/>
            <person name="Parkhill J."/>
        </authorList>
    </citation>
    <scope>NUCLEOTIDE SEQUENCE [LARGE SCALE GENOMIC DNA]</scope>
    <source>
        <strain>AKU_12601</strain>
    </source>
</reference>
<organism>
    <name type="scientific">Salmonella paratyphi A (strain AKU_12601)</name>
    <dbReference type="NCBI Taxonomy" id="554290"/>
    <lineage>
        <taxon>Bacteria</taxon>
        <taxon>Pseudomonadati</taxon>
        <taxon>Pseudomonadota</taxon>
        <taxon>Gammaproteobacteria</taxon>
        <taxon>Enterobacterales</taxon>
        <taxon>Enterobacteriaceae</taxon>
        <taxon>Salmonella</taxon>
    </lineage>
</organism>
<name>MEND_SALPK</name>
<comment type="function">
    <text evidence="1">Catalyzes the thiamine diphosphate-dependent decarboxylation of 2-oxoglutarate and the subsequent addition of the resulting succinic semialdehyde-thiamine pyrophosphate anion to isochorismate to yield 2-succinyl-5-enolpyruvyl-6-hydroxy-3-cyclohexene-1-carboxylate (SEPHCHC).</text>
</comment>
<comment type="catalytic activity">
    <reaction evidence="1">
        <text>isochorismate + 2-oxoglutarate + H(+) = 5-enolpyruvoyl-6-hydroxy-2-succinyl-cyclohex-3-ene-1-carboxylate + CO2</text>
        <dbReference type="Rhea" id="RHEA:25593"/>
        <dbReference type="ChEBI" id="CHEBI:15378"/>
        <dbReference type="ChEBI" id="CHEBI:16526"/>
        <dbReference type="ChEBI" id="CHEBI:16810"/>
        <dbReference type="ChEBI" id="CHEBI:29780"/>
        <dbReference type="ChEBI" id="CHEBI:58818"/>
        <dbReference type="EC" id="2.2.1.9"/>
    </reaction>
</comment>
<comment type="cofactor">
    <cofactor evidence="1">
        <name>Mg(2+)</name>
        <dbReference type="ChEBI" id="CHEBI:18420"/>
    </cofactor>
    <cofactor evidence="1">
        <name>Mn(2+)</name>
        <dbReference type="ChEBI" id="CHEBI:29035"/>
    </cofactor>
</comment>
<comment type="cofactor">
    <cofactor evidence="1">
        <name>thiamine diphosphate</name>
        <dbReference type="ChEBI" id="CHEBI:58937"/>
    </cofactor>
    <text evidence="1">Binds 1 thiamine pyrophosphate per subunit.</text>
</comment>
<comment type="pathway">
    <text evidence="1">Quinol/quinone metabolism; 1,4-dihydroxy-2-naphthoate biosynthesis; 1,4-dihydroxy-2-naphthoate from chorismate: step 2/7.</text>
</comment>
<comment type="pathway">
    <text evidence="1">Quinol/quinone metabolism; menaquinone biosynthesis.</text>
</comment>
<comment type="subunit">
    <text evidence="1">Homodimer.</text>
</comment>
<comment type="similarity">
    <text evidence="1">Belongs to the TPP enzyme family. MenD subfamily.</text>
</comment>
<proteinExistence type="inferred from homology"/>